<evidence type="ECO:0000250" key="1"/>
<evidence type="ECO:0000250" key="2">
    <source>
        <dbReference type="UniProtKB" id="Q64305"/>
    </source>
</evidence>
<evidence type="ECO:0000255" key="3">
    <source>
        <dbReference type="PROSITE-ProRule" id="PRU00981"/>
    </source>
</evidence>
<evidence type="ECO:0000269" key="4">
    <source>
    </source>
</evidence>
<evidence type="ECO:0000303" key="5">
    <source>
    </source>
</evidence>
<evidence type="ECO:0000305" key="6"/>
<evidence type="ECO:0000312" key="7">
    <source>
        <dbReference type="EMBL" id="AAK72958.1"/>
    </source>
</evidence>
<evidence type="ECO:0000312" key="8">
    <source>
        <dbReference type="WormBase" id="F48D6.3"/>
    </source>
</evidence>
<accession>Q20561</accession>
<feature type="chain" id="PRO_0000377380" description="Helix-loop-helix protein 13">
    <location>
        <begin position="1"/>
        <end position="147"/>
    </location>
</feature>
<feature type="domain" description="bHLH" evidence="3">
    <location>
        <begin position="41"/>
        <end position="93"/>
    </location>
</feature>
<protein>
    <recommendedName>
        <fullName>Helix-loop-helix protein 13</fullName>
    </recommendedName>
    <alternativeName>
        <fullName>Fer3-like protein</fullName>
    </alternativeName>
    <alternativeName>
        <fullName>Nephew of atonal 3</fullName>
    </alternativeName>
</protein>
<gene>
    <name evidence="8" type="primary">hlh-13</name>
    <name evidence="5" type="synonym">cnato3</name>
    <name evidence="7" type="synonym">ferd-3l</name>
    <name type="ORF">F48D6.3</name>
</gene>
<keyword id="KW-0963">Cytoplasm</keyword>
<keyword id="KW-0217">Developmental protein</keyword>
<keyword id="KW-0221">Differentiation</keyword>
<keyword id="KW-0238">DNA-binding</keyword>
<keyword id="KW-0539">Nucleus</keyword>
<keyword id="KW-1185">Reference proteome</keyword>
<keyword id="KW-0804">Transcription</keyword>
<keyword id="KW-0805">Transcription regulation</keyword>
<name>HLH13_CAEEL</name>
<reference evidence="7" key="1">
    <citation type="journal article" date="2001" name="Mech. Dev.">
        <title>Nato3 is an evolutionarily conserved bHLH transcription factor expressed in the CNS of Drosophila and mouse.</title>
        <authorList>
            <person name="Segev E."/>
            <person name="Halachmi N."/>
            <person name="Salzberg A."/>
            <person name="Ben-Arie N."/>
        </authorList>
    </citation>
    <scope>NUCLEOTIDE SEQUENCE [GENOMIC DNA]</scope>
</reference>
<reference key="2">
    <citation type="journal article" date="1998" name="Science">
        <title>Genome sequence of the nematode C. elegans: a platform for investigating biology.</title>
        <authorList>
            <consortium name="The C. elegans sequencing consortium"/>
        </authorList>
    </citation>
    <scope>NUCLEOTIDE SEQUENCE [LARGE SCALE GENOMIC DNA]</scope>
    <source>
        <strain>Bristol N2</strain>
    </source>
</reference>
<reference evidence="6" key="3">
    <citation type="journal article" date="2009" name="Dev. Biol.">
        <title>Combined informatic and expression screen identifies the novel DAF-16 target HLH-13.</title>
        <authorList>
            <person name="Liachko N."/>
            <person name="Davidowitz R."/>
            <person name="Lee S.S."/>
        </authorList>
    </citation>
    <scope>FUNCTION</scope>
    <scope>TISSUE SPECIFICITY</scope>
    <scope>DEVELOPMENTAL STAGE</scope>
    <scope>INDUCTION</scope>
    <scope>DISRUPTION PHENOTYPE</scope>
</reference>
<sequence length="147" mass="16746">MTASSSGCGGLPVSQCPSYSSLSKLFFMDSSYDSYYCEEPEERQTASIRERKRMCSINVAFIELRNYIPTFPYEKRLSKIDTLNLAIAYINMLDDVLRTPEDSGQYIQKCVHMARTGQIGAPAWSTSDLLARLNWIKWRRLGIEPIA</sequence>
<comment type="function">
    <text evidence="1 4">Transcriptional activator (By similarity). Shown to have a role in the negative regulation of exit from L1 arrest and dauer diapause dependent on IIS signaling (insulin and insulin-like growth factor (IGF) signaling). Hypodermal expression is regulated by IIS/daf-16 while neuronal expression is not under the control of IIS/daf-16.</text>
</comment>
<comment type="subcellular location">
    <subcellularLocation>
        <location evidence="2 3">Nucleus</location>
    </subcellularLocation>
    <subcellularLocation>
        <location evidence="2">Cytoplasm</location>
    </subcellularLocation>
</comment>
<comment type="tissue specificity">
    <text evidence="4">Expressed in hermaphrodite dopaminergic neurons (ADE, CEP, and PDE).</text>
</comment>
<comment type="developmental stage">
    <text evidence="4">Expressed throughout development and adulthood but abundance declines with age.</text>
</comment>
<comment type="induction">
    <text evidence="4">Induced by daf-16.</text>
</comment>
<comment type="disruption phenotype">
    <text evidence="4">Faster exit from L1 arrest and IIS-dependent dauer diapause.</text>
</comment>
<proteinExistence type="evidence at transcript level"/>
<dbReference type="EMBL" id="AF369899">
    <property type="protein sequence ID" value="AAK72958.1"/>
    <property type="molecule type" value="Genomic_DNA"/>
</dbReference>
<dbReference type="EMBL" id="FO080925">
    <property type="protein sequence ID" value="CCD67847.1"/>
    <property type="molecule type" value="Genomic_DNA"/>
</dbReference>
<dbReference type="PIR" id="T29241">
    <property type="entry name" value="T29241"/>
</dbReference>
<dbReference type="RefSeq" id="NP_508725.1">
    <property type="nucleotide sequence ID" value="NM_076324.5"/>
</dbReference>
<dbReference type="SMR" id="Q20561"/>
<dbReference type="BioGRID" id="50731">
    <property type="interactions" value="1"/>
</dbReference>
<dbReference type="FunCoup" id="Q20561">
    <property type="interactions" value="297"/>
</dbReference>
<dbReference type="IntAct" id="Q20561">
    <property type="interactions" value="1"/>
</dbReference>
<dbReference type="STRING" id="6239.F48D6.3.1"/>
<dbReference type="PaxDb" id="6239-F48D6.3"/>
<dbReference type="EnsemblMetazoa" id="F48D6.3.1">
    <property type="protein sequence ID" value="F48D6.3.1"/>
    <property type="gene ID" value="WBGene00001957"/>
</dbReference>
<dbReference type="GeneID" id="185980"/>
<dbReference type="KEGG" id="cel:CELE_F48D6.3"/>
<dbReference type="UCSC" id="F48D6.3">
    <property type="organism name" value="c. elegans"/>
</dbReference>
<dbReference type="AGR" id="WB:WBGene00001957"/>
<dbReference type="CTD" id="185980"/>
<dbReference type="WormBase" id="F48D6.3">
    <property type="protein sequence ID" value="CE07260"/>
    <property type="gene ID" value="WBGene00001957"/>
    <property type="gene designation" value="hlh-13"/>
</dbReference>
<dbReference type="eggNOG" id="KOG4029">
    <property type="taxonomic scope" value="Eukaryota"/>
</dbReference>
<dbReference type="GeneTree" id="ENSGT00940000165503"/>
<dbReference type="HOGENOM" id="CLU_125146_0_0_1"/>
<dbReference type="InParanoid" id="Q20561"/>
<dbReference type="OMA" id="RRMCSIN"/>
<dbReference type="OrthoDB" id="6125763at2759"/>
<dbReference type="PhylomeDB" id="Q20561"/>
<dbReference type="PRO" id="PR:Q20561"/>
<dbReference type="Proteomes" id="UP000001940">
    <property type="component" value="Chromosome X"/>
</dbReference>
<dbReference type="Bgee" id="WBGene00001957">
    <property type="expression patterns" value="Expressed in pharyngeal muscle cell (C elegans) and 3 other cell types or tissues"/>
</dbReference>
<dbReference type="GO" id="GO:0005737">
    <property type="term" value="C:cytoplasm"/>
    <property type="evidence" value="ECO:0007669"/>
    <property type="project" value="UniProtKB-SubCell"/>
</dbReference>
<dbReference type="GO" id="GO:0005634">
    <property type="term" value="C:nucleus"/>
    <property type="evidence" value="ECO:0000304"/>
    <property type="project" value="UniProtKB"/>
</dbReference>
<dbReference type="GO" id="GO:0000981">
    <property type="term" value="F:DNA-binding transcription factor activity, RNA polymerase II-specific"/>
    <property type="evidence" value="ECO:0000318"/>
    <property type="project" value="GO_Central"/>
</dbReference>
<dbReference type="GO" id="GO:0140297">
    <property type="term" value="F:DNA-binding transcription factor binding"/>
    <property type="evidence" value="ECO:0000353"/>
    <property type="project" value="UniProtKB"/>
</dbReference>
<dbReference type="GO" id="GO:0046983">
    <property type="term" value="F:protein dimerization activity"/>
    <property type="evidence" value="ECO:0007669"/>
    <property type="project" value="InterPro"/>
</dbReference>
<dbReference type="GO" id="GO:0000977">
    <property type="term" value="F:RNA polymerase II transcription regulatory region sequence-specific DNA binding"/>
    <property type="evidence" value="ECO:0000318"/>
    <property type="project" value="GO_Central"/>
</dbReference>
<dbReference type="GO" id="GO:0030154">
    <property type="term" value="P:cell differentiation"/>
    <property type="evidence" value="ECO:0007669"/>
    <property type="project" value="UniProtKB-KW"/>
</dbReference>
<dbReference type="GO" id="GO:0043054">
    <property type="term" value="P:dauer exit"/>
    <property type="evidence" value="ECO:0000315"/>
    <property type="project" value="UniProtKB"/>
</dbReference>
<dbReference type="GO" id="GO:0032502">
    <property type="term" value="P:developmental process"/>
    <property type="evidence" value="ECO:0000318"/>
    <property type="project" value="GO_Central"/>
</dbReference>
<dbReference type="GO" id="GO:0006357">
    <property type="term" value="P:regulation of transcription by RNA polymerase II"/>
    <property type="evidence" value="ECO:0000318"/>
    <property type="project" value="GO_Central"/>
</dbReference>
<dbReference type="GO" id="GO:0006979">
    <property type="term" value="P:response to oxidative stress"/>
    <property type="evidence" value="ECO:0000315"/>
    <property type="project" value="WormBase"/>
</dbReference>
<dbReference type="Gene3D" id="4.10.280.10">
    <property type="entry name" value="Helix-loop-helix DNA-binding domain"/>
    <property type="match status" value="1"/>
</dbReference>
<dbReference type="InterPro" id="IPR011598">
    <property type="entry name" value="bHLH_dom"/>
</dbReference>
<dbReference type="InterPro" id="IPR050283">
    <property type="entry name" value="E-box_TF_Regulators"/>
</dbReference>
<dbReference type="InterPro" id="IPR036638">
    <property type="entry name" value="HLH_DNA-bd_sf"/>
</dbReference>
<dbReference type="PANTHER" id="PTHR23349">
    <property type="entry name" value="BASIC HELIX-LOOP-HELIX TRANSCRIPTION FACTOR, TWIST"/>
    <property type="match status" value="1"/>
</dbReference>
<dbReference type="PANTHER" id="PTHR23349:SF97">
    <property type="entry name" value="BHLH DOMAIN-CONTAINING PROTEIN"/>
    <property type="match status" value="1"/>
</dbReference>
<dbReference type="Pfam" id="PF00010">
    <property type="entry name" value="HLH"/>
    <property type="match status" value="1"/>
</dbReference>
<dbReference type="SMART" id="SM00353">
    <property type="entry name" value="HLH"/>
    <property type="match status" value="1"/>
</dbReference>
<dbReference type="SUPFAM" id="SSF47459">
    <property type="entry name" value="HLH, helix-loop-helix DNA-binding domain"/>
    <property type="match status" value="1"/>
</dbReference>
<dbReference type="PROSITE" id="PS50888">
    <property type="entry name" value="BHLH"/>
    <property type="match status" value="1"/>
</dbReference>
<organism>
    <name type="scientific">Caenorhabditis elegans</name>
    <dbReference type="NCBI Taxonomy" id="6239"/>
    <lineage>
        <taxon>Eukaryota</taxon>
        <taxon>Metazoa</taxon>
        <taxon>Ecdysozoa</taxon>
        <taxon>Nematoda</taxon>
        <taxon>Chromadorea</taxon>
        <taxon>Rhabditida</taxon>
        <taxon>Rhabditina</taxon>
        <taxon>Rhabditomorpha</taxon>
        <taxon>Rhabditoidea</taxon>
        <taxon>Rhabditidae</taxon>
        <taxon>Peloderinae</taxon>
        <taxon>Caenorhabditis</taxon>
    </lineage>
</organism>